<name>SULA_ECOHS</name>
<feature type="chain" id="PRO_0000343966" description="Cell division inhibitor SulA">
    <location>
        <begin position="1"/>
        <end position="169"/>
    </location>
</feature>
<feature type="region of interest" description="FtsZ binding" evidence="1">
    <location>
        <begin position="106"/>
        <end position="112"/>
    </location>
</feature>
<feature type="region of interest" description="Lon protease binding" evidence="1">
    <location>
        <begin position="162"/>
        <end position="169"/>
    </location>
</feature>
<feature type="site" description="Essential for degradation by Lon protease" evidence="1">
    <location>
        <position position="169"/>
    </location>
</feature>
<keyword id="KW-0131">Cell cycle</keyword>
<keyword id="KW-0132">Cell division</keyword>
<keyword id="KW-0227">DNA damage</keyword>
<keyword id="KW-0717">Septation</keyword>
<keyword id="KW-0742">SOS response</keyword>
<proteinExistence type="inferred from homology"/>
<gene>
    <name evidence="1" type="primary">sulA</name>
    <name type="ordered locus">EcHS_A1067</name>
</gene>
<protein>
    <recommendedName>
        <fullName evidence="1">Cell division inhibitor SulA</fullName>
    </recommendedName>
</protein>
<comment type="function">
    <text evidence="1">Component of the SOS system and an inhibitor of cell division. Accumulation of SulA causes rapid cessation of cell division and the appearance of long, non-septate filaments. In the presence of GTP, binds a polymerization-competent form of FtsZ in a 1:1 ratio, thus inhibiting FtsZ polymerization and therefore preventing it from participating in the assembly of the Z ring. This mechanism prevents the premature segregation of damaged DNA to daughter cells during cell division.</text>
</comment>
<comment type="subunit">
    <text evidence="1">Interacts with FtsZ.</text>
</comment>
<comment type="induction">
    <text evidence="1">By DNA damage, as part of the SOS response.</text>
</comment>
<comment type="PTM">
    <text evidence="1">Is rapidly cleaved and degraded by the Lon protease once DNA damage is repaired.</text>
</comment>
<comment type="similarity">
    <text evidence="1">Belongs to the SulA family.</text>
</comment>
<organism>
    <name type="scientific">Escherichia coli O9:H4 (strain HS)</name>
    <dbReference type="NCBI Taxonomy" id="331112"/>
    <lineage>
        <taxon>Bacteria</taxon>
        <taxon>Pseudomonadati</taxon>
        <taxon>Pseudomonadota</taxon>
        <taxon>Gammaproteobacteria</taxon>
        <taxon>Enterobacterales</taxon>
        <taxon>Enterobacteriaceae</taxon>
        <taxon>Escherichia</taxon>
    </lineage>
</organism>
<sequence>MYTSGYAHRSSSFSSAASKIARVSTENTTAGLISEVVYREDQPMMTQLLLLPLLQQLGQQSRWQLWLTPQQKLSREWVQASGLPLTKVMQISQLSPCHTVESMVRALRTGNYSVVIGWLADDLTEEEHAELVDAANEGNAMGFIMRPVSASSHATRQLSGLKIHSNLYH</sequence>
<reference key="1">
    <citation type="journal article" date="2008" name="J. Bacteriol.">
        <title>The pangenome structure of Escherichia coli: comparative genomic analysis of E. coli commensal and pathogenic isolates.</title>
        <authorList>
            <person name="Rasko D.A."/>
            <person name="Rosovitz M.J."/>
            <person name="Myers G.S.A."/>
            <person name="Mongodin E.F."/>
            <person name="Fricke W.F."/>
            <person name="Gajer P."/>
            <person name="Crabtree J."/>
            <person name="Sebaihia M."/>
            <person name="Thomson N.R."/>
            <person name="Chaudhuri R."/>
            <person name="Henderson I.R."/>
            <person name="Sperandio V."/>
            <person name="Ravel J."/>
        </authorList>
    </citation>
    <scope>NUCLEOTIDE SEQUENCE [LARGE SCALE GENOMIC DNA]</scope>
    <source>
        <strain>HS</strain>
    </source>
</reference>
<accession>A7ZYR0</accession>
<evidence type="ECO:0000255" key="1">
    <source>
        <dbReference type="HAMAP-Rule" id="MF_01179"/>
    </source>
</evidence>
<dbReference type="EMBL" id="CP000802">
    <property type="protein sequence ID" value="ABV05414.1"/>
    <property type="molecule type" value="Genomic_DNA"/>
</dbReference>
<dbReference type="RefSeq" id="WP_000288710.1">
    <property type="nucleotide sequence ID" value="NC_009800.1"/>
</dbReference>
<dbReference type="SMR" id="A7ZYR0"/>
<dbReference type="GeneID" id="93776456"/>
<dbReference type="KEGG" id="ecx:EcHS_A1067"/>
<dbReference type="HOGENOM" id="CLU_118972_1_0_6"/>
<dbReference type="GO" id="GO:0000917">
    <property type="term" value="P:division septum assembly"/>
    <property type="evidence" value="ECO:0007669"/>
    <property type="project" value="UniProtKB-KW"/>
</dbReference>
<dbReference type="GO" id="GO:0006281">
    <property type="term" value="P:DNA repair"/>
    <property type="evidence" value="ECO:0007669"/>
    <property type="project" value="TreeGrafter"/>
</dbReference>
<dbReference type="GO" id="GO:0051782">
    <property type="term" value="P:negative regulation of cell division"/>
    <property type="evidence" value="ECO:0007669"/>
    <property type="project" value="UniProtKB-UniRule"/>
</dbReference>
<dbReference type="GO" id="GO:0009432">
    <property type="term" value="P:SOS response"/>
    <property type="evidence" value="ECO:0007669"/>
    <property type="project" value="UniProtKB-UniRule"/>
</dbReference>
<dbReference type="FunFam" id="3.40.50.300:FF:000417">
    <property type="entry name" value="Cell division inhibitor SulA"/>
    <property type="match status" value="1"/>
</dbReference>
<dbReference type="Gene3D" id="3.40.50.300">
    <property type="entry name" value="P-loop containing nucleotide triphosphate hydrolases"/>
    <property type="match status" value="1"/>
</dbReference>
<dbReference type="HAMAP" id="MF_01179">
    <property type="entry name" value="SulA"/>
    <property type="match status" value="1"/>
</dbReference>
<dbReference type="InterPro" id="IPR004596">
    <property type="entry name" value="Cell_div_suppressor_SulA"/>
</dbReference>
<dbReference type="InterPro" id="IPR027417">
    <property type="entry name" value="P-loop_NTPase"/>
</dbReference>
<dbReference type="InterPro" id="IPR050356">
    <property type="entry name" value="SulA_CellDiv_inhibitor"/>
</dbReference>
<dbReference type="InterPro" id="IPR047696">
    <property type="entry name" value="SulA_enterobact"/>
</dbReference>
<dbReference type="NCBIfam" id="NF007892">
    <property type="entry name" value="PRK10595.1"/>
    <property type="match status" value="1"/>
</dbReference>
<dbReference type="NCBIfam" id="TIGR00623">
    <property type="entry name" value="SOS_SulA_coli"/>
    <property type="match status" value="1"/>
</dbReference>
<dbReference type="PANTHER" id="PTHR35369">
    <property type="entry name" value="BLR3025 PROTEIN-RELATED"/>
    <property type="match status" value="1"/>
</dbReference>
<dbReference type="PANTHER" id="PTHR35369:SF4">
    <property type="entry name" value="CELL DIVISION INHIBITOR SULA"/>
    <property type="match status" value="1"/>
</dbReference>
<dbReference type="Pfam" id="PF03846">
    <property type="entry name" value="SulA"/>
    <property type="match status" value="1"/>
</dbReference>
<dbReference type="PIRSF" id="PIRSF003093">
    <property type="entry name" value="SulA"/>
    <property type="match status" value="1"/>
</dbReference>
<dbReference type="SUPFAM" id="SSF52540">
    <property type="entry name" value="P-loop containing nucleoside triphosphate hydrolases"/>
    <property type="match status" value="1"/>
</dbReference>